<protein>
    <recommendedName>
        <fullName evidence="1">LexA repressor</fullName>
        <ecNumber evidence="1">3.4.21.88</ecNumber>
    </recommendedName>
</protein>
<evidence type="ECO:0000255" key="1">
    <source>
        <dbReference type="HAMAP-Rule" id="MF_00015"/>
    </source>
</evidence>
<keyword id="KW-0068">Autocatalytic cleavage</keyword>
<keyword id="KW-0227">DNA damage</keyword>
<keyword id="KW-0234">DNA repair</keyword>
<keyword id="KW-0235">DNA replication</keyword>
<keyword id="KW-0238">DNA-binding</keyword>
<keyword id="KW-0378">Hydrolase</keyword>
<keyword id="KW-0678">Repressor</keyword>
<keyword id="KW-0742">SOS response</keyword>
<keyword id="KW-0804">Transcription</keyword>
<keyword id="KW-0805">Transcription regulation</keyword>
<gene>
    <name evidence="1" type="primary">lexA</name>
    <name type="ordered locus">BceJ2315_16150</name>
    <name type="ORF">BCAL1651</name>
</gene>
<feature type="chain" id="PRO_1000089552" description="LexA repressor">
    <location>
        <begin position="1"/>
        <end position="215"/>
    </location>
</feature>
<feature type="DNA-binding region" description="H-T-H motif" evidence="1">
    <location>
        <begin position="28"/>
        <end position="48"/>
    </location>
</feature>
<feature type="active site" description="For autocatalytic cleavage activity" evidence="1">
    <location>
        <position position="133"/>
    </location>
</feature>
<feature type="active site" description="For autocatalytic cleavage activity" evidence="1">
    <location>
        <position position="170"/>
    </location>
</feature>
<feature type="site" description="Cleavage; by autolysis" evidence="1">
    <location>
        <begin position="98"/>
        <end position="99"/>
    </location>
</feature>
<sequence>MTKLTARQQQVFDLIRRAIERSGFPPTRAEIAAELGFSSPNAAEEHLRALARKGVIELAAGASRGIRLLGVDDAPHQFTLPHAALMQLSLPLVGRVAAGSPILAQEHISQHYACDPALFTSKPDYLLKVRGLSMRDAGILDGDLLAVQKRTEAKDGQIIVARLGDDVTVKRLMRRPGGLELIAENPDYENIFVKAGSADFALEGIAVGLIRSGEL</sequence>
<name>LEXA_BURCJ</name>
<reference key="1">
    <citation type="journal article" date="2009" name="J. Bacteriol.">
        <title>The genome of Burkholderia cenocepacia J2315, an epidemic pathogen of cystic fibrosis patients.</title>
        <authorList>
            <person name="Holden M.T."/>
            <person name="Seth-Smith H.M."/>
            <person name="Crossman L.C."/>
            <person name="Sebaihia M."/>
            <person name="Bentley S.D."/>
            <person name="Cerdeno-Tarraga A.M."/>
            <person name="Thomson N.R."/>
            <person name="Bason N."/>
            <person name="Quail M.A."/>
            <person name="Sharp S."/>
            <person name="Cherevach I."/>
            <person name="Churcher C."/>
            <person name="Goodhead I."/>
            <person name="Hauser H."/>
            <person name="Holroyd N."/>
            <person name="Mungall K."/>
            <person name="Scott P."/>
            <person name="Walker D."/>
            <person name="White B."/>
            <person name="Rose H."/>
            <person name="Iversen P."/>
            <person name="Mil-Homens D."/>
            <person name="Rocha E.P."/>
            <person name="Fialho A.M."/>
            <person name="Baldwin A."/>
            <person name="Dowson C."/>
            <person name="Barrell B.G."/>
            <person name="Govan J.R."/>
            <person name="Vandamme P."/>
            <person name="Hart C.A."/>
            <person name="Mahenthiralingam E."/>
            <person name="Parkhill J."/>
        </authorList>
    </citation>
    <scope>NUCLEOTIDE SEQUENCE [LARGE SCALE GENOMIC DNA]</scope>
    <source>
        <strain>ATCC BAA-245 / DSM 16553 / LMG 16656 / NCTC 13227 / J2315 / CF5610</strain>
    </source>
</reference>
<dbReference type="EC" id="3.4.21.88" evidence="1"/>
<dbReference type="EMBL" id="AM747720">
    <property type="protein sequence ID" value="CAR51950.1"/>
    <property type="molecule type" value="Genomic_DNA"/>
</dbReference>
<dbReference type="RefSeq" id="WP_006484226.1">
    <property type="nucleotide sequence ID" value="NC_011000.1"/>
</dbReference>
<dbReference type="SMR" id="B4E8S4"/>
<dbReference type="MEROPS" id="S24.001"/>
<dbReference type="GeneID" id="56558129"/>
<dbReference type="KEGG" id="bcj:BCAL1651"/>
<dbReference type="eggNOG" id="COG1974">
    <property type="taxonomic scope" value="Bacteria"/>
</dbReference>
<dbReference type="HOGENOM" id="CLU_066192_45_3_4"/>
<dbReference type="BioCyc" id="BCEN216591:G1G1V-1830-MONOMER"/>
<dbReference type="Proteomes" id="UP000001035">
    <property type="component" value="Chromosome 1"/>
</dbReference>
<dbReference type="GO" id="GO:0003677">
    <property type="term" value="F:DNA binding"/>
    <property type="evidence" value="ECO:0007669"/>
    <property type="project" value="UniProtKB-UniRule"/>
</dbReference>
<dbReference type="GO" id="GO:0004252">
    <property type="term" value="F:serine-type endopeptidase activity"/>
    <property type="evidence" value="ECO:0007669"/>
    <property type="project" value="UniProtKB-UniRule"/>
</dbReference>
<dbReference type="GO" id="GO:0006281">
    <property type="term" value="P:DNA repair"/>
    <property type="evidence" value="ECO:0007669"/>
    <property type="project" value="UniProtKB-UniRule"/>
</dbReference>
<dbReference type="GO" id="GO:0006260">
    <property type="term" value="P:DNA replication"/>
    <property type="evidence" value="ECO:0007669"/>
    <property type="project" value="UniProtKB-UniRule"/>
</dbReference>
<dbReference type="GO" id="GO:0045892">
    <property type="term" value="P:negative regulation of DNA-templated transcription"/>
    <property type="evidence" value="ECO:0007669"/>
    <property type="project" value="UniProtKB-UniRule"/>
</dbReference>
<dbReference type="GO" id="GO:0006508">
    <property type="term" value="P:proteolysis"/>
    <property type="evidence" value="ECO:0007669"/>
    <property type="project" value="InterPro"/>
</dbReference>
<dbReference type="GO" id="GO:0009432">
    <property type="term" value="P:SOS response"/>
    <property type="evidence" value="ECO:0007669"/>
    <property type="project" value="UniProtKB-UniRule"/>
</dbReference>
<dbReference type="CDD" id="cd06529">
    <property type="entry name" value="S24_LexA-like"/>
    <property type="match status" value="1"/>
</dbReference>
<dbReference type="FunFam" id="1.10.10.10:FF:000009">
    <property type="entry name" value="LexA repressor"/>
    <property type="match status" value="1"/>
</dbReference>
<dbReference type="FunFam" id="2.10.109.10:FF:000001">
    <property type="entry name" value="LexA repressor"/>
    <property type="match status" value="1"/>
</dbReference>
<dbReference type="Gene3D" id="2.10.109.10">
    <property type="entry name" value="Umud Fragment, subunit A"/>
    <property type="match status" value="1"/>
</dbReference>
<dbReference type="Gene3D" id="1.10.10.10">
    <property type="entry name" value="Winged helix-like DNA-binding domain superfamily/Winged helix DNA-binding domain"/>
    <property type="match status" value="1"/>
</dbReference>
<dbReference type="HAMAP" id="MF_00015">
    <property type="entry name" value="LexA"/>
    <property type="match status" value="1"/>
</dbReference>
<dbReference type="InterPro" id="IPR006200">
    <property type="entry name" value="LexA"/>
</dbReference>
<dbReference type="InterPro" id="IPR039418">
    <property type="entry name" value="LexA-like"/>
</dbReference>
<dbReference type="InterPro" id="IPR036286">
    <property type="entry name" value="LexA/Signal_pep-like_sf"/>
</dbReference>
<dbReference type="InterPro" id="IPR006199">
    <property type="entry name" value="LexA_DNA-bd_dom"/>
</dbReference>
<dbReference type="InterPro" id="IPR050077">
    <property type="entry name" value="LexA_repressor"/>
</dbReference>
<dbReference type="InterPro" id="IPR006197">
    <property type="entry name" value="Peptidase_S24_LexA"/>
</dbReference>
<dbReference type="InterPro" id="IPR015927">
    <property type="entry name" value="Peptidase_S24_S26A/B/C"/>
</dbReference>
<dbReference type="InterPro" id="IPR036388">
    <property type="entry name" value="WH-like_DNA-bd_sf"/>
</dbReference>
<dbReference type="InterPro" id="IPR036390">
    <property type="entry name" value="WH_DNA-bd_sf"/>
</dbReference>
<dbReference type="NCBIfam" id="TIGR00498">
    <property type="entry name" value="lexA"/>
    <property type="match status" value="1"/>
</dbReference>
<dbReference type="PANTHER" id="PTHR33516">
    <property type="entry name" value="LEXA REPRESSOR"/>
    <property type="match status" value="1"/>
</dbReference>
<dbReference type="PANTHER" id="PTHR33516:SF2">
    <property type="entry name" value="LEXA REPRESSOR-RELATED"/>
    <property type="match status" value="1"/>
</dbReference>
<dbReference type="Pfam" id="PF01726">
    <property type="entry name" value="LexA_DNA_bind"/>
    <property type="match status" value="1"/>
</dbReference>
<dbReference type="Pfam" id="PF00717">
    <property type="entry name" value="Peptidase_S24"/>
    <property type="match status" value="1"/>
</dbReference>
<dbReference type="PRINTS" id="PR00726">
    <property type="entry name" value="LEXASERPTASE"/>
</dbReference>
<dbReference type="SUPFAM" id="SSF51306">
    <property type="entry name" value="LexA/Signal peptidase"/>
    <property type="match status" value="1"/>
</dbReference>
<dbReference type="SUPFAM" id="SSF46785">
    <property type="entry name" value="Winged helix' DNA-binding domain"/>
    <property type="match status" value="1"/>
</dbReference>
<comment type="function">
    <text evidence="1">Represses a number of genes involved in the response to DNA damage (SOS response), including recA and lexA. In the presence of single-stranded DNA, RecA interacts with LexA causing an autocatalytic cleavage which disrupts the DNA-binding part of LexA, leading to derepression of the SOS regulon and eventually DNA repair.</text>
</comment>
<comment type="catalytic activity">
    <reaction evidence="1">
        <text>Hydrolysis of Ala-|-Gly bond in repressor LexA.</text>
        <dbReference type="EC" id="3.4.21.88"/>
    </reaction>
</comment>
<comment type="subunit">
    <text evidence="1">Homodimer.</text>
</comment>
<comment type="similarity">
    <text evidence="1">Belongs to the peptidase S24 family.</text>
</comment>
<organism>
    <name type="scientific">Burkholderia cenocepacia (strain ATCC BAA-245 / DSM 16553 / LMG 16656 / NCTC 13227 / J2315 / CF5610)</name>
    <name type="common">Burkholderia cepacia (strain J2315)</name>
    <dbReference type="NCBI Taxonomy" id="216591"/>
    <lineage>
        <taxon>Bacteria</taxon>
        <taxon>Pseudomonadati</taxon>
        <taxon>Pseudomonadota</taxon>
        <taxon>Betaproteobacteria</taxon>
        <taxon>Burkholderiales</taxon>
        <taxon>Burkholderiaceae</taxon>
        <taxon>Burkholderia</taxon>
        <taxon>Burkholderia cepacia complex</taxon>
    </lineage>
</organism>
<proteinExistence type="inferred from homology"/>
<accession>B4E8S4</accession>